<reference key="1">
    <citation type="journal article" date="2005" name="Proc. Natl. Acad. Sci. U.S.A.">
        <title>Comparison of the complete genome sequences of Pseudomonas syringae pv. syringae B728a and pv. tomato DC3000.</title>
        <authorList>
            <person name="Feil H."/>
            <person name="Feil W.S."/>
            <person name="Chain P."/>
            <person name="Larimer F."/>
            <person name="Dibartolo G."/>
            <person name="Copeland A."/>
            <person name="Lykidis A."/>
            <person name="Trong S."/>
            <person name="Nolan M."/>
            <person name="Goltsman E."/>
            <person name="Thiel J."/>
            <person name="Malfatti S."/>
            <person name="Loper J.E."/>
            <person name="Lapidus A."/>
            <person name="Detter J.C."/>
            <person name="Land M."/>
            <person name="Richardson P.M."/>
            <person name="Kyrpides N.C."/>
            <person name="Ivanova N."/>
            <person name="Lindow S.E."/>
        </authorList>
    </citation>
    <scope>NUCLEOTIDE SEQUENCE [LARGE SCALE GENOMIC DNA]</scope>
    <source>
        <strain>B728a</strain>
    </source>
</reference>
<dbReference type="EC" id="3.5.4.19" evidence="1"/>
<dbReference type="EMBL" id="CP000075">
    <property type="protein sequence ID" value="AAY35456.1"/>
    <property type="molecule type" value="Genomic_DNA"/>
</dbReference>
<dbReference type="RefSeq" id="WP_003403068.1">
    <property type="nucleotide sequence ID" value="NC_007005.1"/>
</dbReference>
<dbReference type="RefSeq" id="YP_233494.1">
    <property type="nucleotide sequence ID" value="NC_007005.1"/>
</dbReference>
<dbReference type="SMR" id="Q4ZZG6"/>
<dbReference type="STRING" id="205918.Psyr_0386"/>
<dbReference type="KEGG" id="psb:Psyr_0386"/>
<dbReference type="PATRIC" id="fig|205918.7.peg.399"/>
<dbReference type="eggNOG" id="COG0139">
    <property type="taxonomic scope" value="Bacteria"/>
</dbReference>
<dbReference type="HOGENOM" id="CLU_048577_5_0_6"/>
<dbReference type="OrthoDB" id="9795769at2"/>
<dbReference type="UniPathway" id="UPA00031">
    <property type="reaction ID" value="UER00008"/>
</dbReference>
<dbReference type="Proteomes" id="UP000000426">
    <property type="component" value="Chromosome"/>
</dbReference>
<dbReference type="GO" id="GO:0005737">
    <property type="term" value="C:cytoplasm"/>
    <property type="evidence" value="ECO:0007669"/>
    <property type="project" value="UniProtKB-SubCell"/>
</dbReference>
<dbReference type="GO" id="GO:0000287">
    <property type="term" value="F:magnesium ion binding"/>
    <property type="evidence" value="ECO:0007669"/>
    <property type="project" value="UniProtKB-UniRule"/>
</dbReference>
<dbReference type="GO" id="GO:0004635">
    <property type="term" value="F:phosphoribosyl-AMP cyclohydrolase activity"/>
    <property type="evidence" value="ECO:0007669"/>
    <property type="project" value="UniProtKB-UniRule"/>
</dbReference>
<dbReference type="GO" id="GO:0008270">
    <property type="term" value="F:zinc ion binding"/>
    <property type="evidence" value="ECO:0007669"/>
    <property type="project" value="UniProtKB-UniRule"/>
</dbReference>
<dbReference type="GO" id="GO:0000105">
    <property type="term" value="P:L-histidine biosynthetic process"/>
    <property type="evidence" value="ECO:0007669"/>
    <property type="project" value="UniProtKB-UniRule"/>
</dbReference>
<dbReference type="FunFam" id="3.10.20.810:FF:000001">
    <property type="entry name" value="Histidine biosynthesis bifunctional protein HisIE"/>
    <property type="match status" value="1"/>
</dbReference>
<dbReference type="Gene3D" id="3.10.20.810">
    <property type="entry name" value="Phosphoribosyl-AMP cyclohydrolase"/>
    <property type="match status" value="1"/>
</dbReference>
<dbReference type="HAMAP" id="MF_01021">
    <property type="entry name" value="HisI"/>
    <property type="match status" value="1"/>
</dbReference>
<dbReference type="InterPro" id="IPR026660">
    <property type="entry name" value="PRA-CH"/>
</dbReference>
<dbReference type="InterPro" id="IPR002496">
    <property type="entry name" value="PRib_AMP_CycHydrolase_dom"/>
</dbReference>
<dbReference type="InterPro" id="IPR038019">
    <property type="entry name" value="PRib_AMP_CycHydrolase_sf"/>
</dbReference>
<dbReference type="NCBIfam" id="NF000768">
    <property type="entry name" value="PRK00051.1"/>
    <property type="match status" value="1"/>
</dbReference>
<dbReference type="PANTHER" id="PTHR42945">
    <property type="entry name" value="HISTIDINE BIOSYNTHESIS BIFUNCTIONAL PROTEIN"/>
    <property type="match status" value="1"/>
</dbReference>
<dbReference type="PANTHER" id="PTHR42945:SF1">
    <property type="entry name" value="HISTIDINE BIOSYNTHESIS BIFUNCTIONAL PROTEIN HIS7"/>
    <property type="match status" value="1"/>
</dbReference>
<dbReference type="Pfam" id="PF01502">
    <property type="entry name" value="PRA-CH"/>
    <property type="match status" value="1"/>
</dbReference>
<dbReference type="SUPFAM" id="SSF141734">
    <property type="entry name" value="HisI-like"/>
    <property type="match status" value="1"/>
</dbReference>
<proteinExistence type="inferred from homology"/>
<evidence type="ECO:0000255" key="1">
    <source>
        <dbReference type="HAMAP-Rule" id="MF_01021"/>
    </source>
</evidence>
<comment type="function">
    <text evidence="1">Catalyzes the hydrolysis of the adenine ring of phosphoribosyl-AMP.</text>
</comment>
<comment type="catalytic activity">
    <reaction evidence="1">
        <text>1-(5-phospho-beta-D-ribosyl)-5'-AMP + H2O = 1-(5-phospho-beta-D-ribosyl)-5-[(5-phospho-beta-D-ribosylamino)methylideneamino]imidazole-4-carboxamide</text>
        <dbReference type="Rhea" id="RHEA:20049"/>
        <dbReference type="ChEBI" id="CHEBI:15377"/>
        <dbReference type="ChEBI" id="CHEBI:58435"/>
        <dbReference type="ChEBI" id="CHEBI:59457"/>
        <dbReference type="EC" id="3.5.4.19"/>
    </reaction>
</comment>
<comment type="cofactor">
    <cofactor evidence="1">
        <name>Mg(2+)</name>
        <dbReference type="ChEBI" id="CHEBI:18420"/>
    </cofactor>
    <text evidence="1">Binds 1 Mg(2+) ion per subunit.</text>
</comment>
<comment type="cofactor">
    <cofactor evidence="1">
        <name>Zn(2+)</name>
        <dbReference type="ChEBI" id="CHEBI:29105"/>
    </cofactor>
    <text evidence="1">Binds 1 zinc ion per subunit.</text>
</comment>
<comment type="pathway">
    <text evidence="1">Amino-acid biosynthesis; L-histidine biosynthesis; L-histidine from 5-phospho-alpha-D-ribose 1-diphosphate: step 3/9.</text>
</comment>
<comment type="subunit">
    <text evidence="1">Homodimer.</text>
</comment>
<comment type="subcellular location">
    <subcellularLocation>
        <location evidence="1">Cytoplasm</location>
    </subcellularLocation>
</comment>
<comment type="similarity">
    <text evidence="1">Belongs to the PRA-CH family.</text>
</comment>
<protein>
    <recommendedName>
        <fullName evidence="1">Phosphoribosyl-AMP cyclohydrolase</fullName>
        <shortName evidence="1">PRA-CH</shortName>
        <ecNumber evidence="1">3.5.4.19</ecNumber>
    </recommendedName>
</protein>
<name>HIS3_PSEU2</name>
<keyword id="KW-0028">Amino-acid biosynthesis</keyword>
<keyword id="KW-0963">Cytoplasm</keyword>
<keyword id="KW-0368">Histidine biosynthesis</keyword>
<keyword id="KW-0378">Hydrolase</keyword>
<keyword id="KW-0460">Magnesium</keyword>
<keyword id="KW-0479">Metal-binding</keyword>
<keyword id="KW-0862">Zinc</keyword>
<gene>
    <name evidence="1" type="primary">hisI</name>
    <name type="ordered locus">Psyr_0386</name>
</gene>
<sequence>MKDWLDEIHWNSDGLVPAIAQDHKTGRVLMMAWMNREALSLTAAENRAIYWSRSRGKLWRKGEESGHVQKLHELRLDCDADVIILMVEQIGGIACHTGRESCFYRVYEKSGWKTVDPVLKDPDAIYPAGH</sequence>
<organism>
    <name type="scientific">Pseudomonas syringae pv. syringae (strain B728a)</name>
    <dbReference type="NCBI Taxonomy" id="205918"/>
    <lineage>
        <taxon>Bacteria</taxon>
        <taxon>Pseudomonadati</taxon>
        <taxon>Pseudomonadota</taxon>
        <taxon>Gammaproteobacteria</taxon>
        <taxon>Pseudomonadales</taxon>
        <taxon>Pseudomonadaceae</taxon>
        <taxon>Pseudomonas</taxon>
        <taxon>Pseudomonas syringae</taxon>
    </lineage>
</organism>
<feature type="chain" id="PRO_0000229838" description="Phosphoribosyl-AMP cyclohydrolase">
    <location>
        <begin position="1"/>
        <end position="130"/>
    </location>
</feature>
<feature type="binding site" evidence="1">
    <location>
        <position position="77"/>
    </location>
    <ligand>
        <name>Mg(2+)</name>
        <dbReference type="ChEBI" id="CHEBI:18420"/>
    </ligand>
</feature>
<feature type="binding site" evidence="1">
    <location>
        <position position="78"/>
    </location>
    <ligand>
        <name>Zn(2+)</name>
        <dbReference type="ChEBI" id="CHEBI:29105"/>
        <note>ligand shared between dimeric partners</note>
    </ligand>
</feature>
<feature type="binding site" evidence="1">
    <location>
        <position position="79"/>
    </location>
    <ligand>
        <name>Mg(2+)</name>
        <dbReference type="ChEBI" id="CHEBI:18420"/>
    </ligand>
</feature>
<feature type="binding site" evidence="1">
    <location>
        <position position="81"/>
    </location>
    <ligand>
        <name>Mg(2+)</name>
        <dbReference type="ChEBI" id="CHEBI:18420"/>
    </ligand>
</feature>
<feature type="binding site" evidence="1">
    <location>
        <position position="95"/>
    </location>
    <ligand>
        <name>Zn(2+)</name>
        <dbReference type="ChEBI" id="CHEBI:29105"/>
        <note>ligand shared between dimeric partners</note>
    </ligand>
</feature>
<feature type="binding site" evidence="1">
    <location>
        <position position="102"/>
    </location>
    <ligand>
        <name>Zn(2+)</name>
        <dbReference type="ChEBI" id="CHEBI:29105"/>
        <note>ligand shared between dimeric partners</note>
    </ligand>
</feature>
<accession>Q4ZZG6</accession>